<gene>
    <name type="ordered locus">BCG_1726</name>
</gene>
<proteinExistence type="inferred from homology"/>
<keyword id="KW-0227">DNA damage</keyword>
<keyword id="KW-0234">DNA repair</keyword>
<keyword id="KW-0378">Hydrolase</keyword>
<feature type="chain" id="PRO_1000050994" description="Putative 3-methyladenine DNA glycosylase">
    <location>
        <begin position="1"/>
        <end position="203"/>
    </location>
</feature>
<comment type="similarity">
    <text evidence="1">Belongs to the DNA glycosylase MPG family.</text>
</comment>
<name>3MGH_MYCBP</name>
<sequence>MNAEELAIDPVAAAHRLLGATIAGRGVRAMVVEVEAYGGVPDGPWPDAAAHSYRGRNGRNDVMFGPPGRLYTYRSHGIHVCANVACGPDGTAAAVLLRAAAIEDGAELATSRRGQTVRAVALARGPGNLCAALGITMADNGIDLFDPSSPVRLRLNDTHRARSGPRVGVSQAADRPWRLWLTGRPEVSAYRRSSRAPARGASD</sequence>
<accession>A1KJA4</accession>
<reference key="1">
    <citation type="journal article" date="2007" name="Proc. Natl. Acad. Sci. U.S.A.">
        <title>Genome plasticity of BCG and impact on vaccine efficacy.</title>
        <authorList>
            <person name="Brosch R."/>
            <person name="Gordon S.V."/>
            <person name="Garnier T."/>
            <person name="Eiglmeier K."/>
            <person name="Frigui W."/>
            <person name="Valenti P."/>
            <person name="Dos Santos S."/>
            <person name="Duthoy S."/>
            <person name="Lacroix C."/>
            <person name="Garcia-Pelayo C."/>
            <person name="Inwald J.K."/>
            <person name="Golby P."/>
            <person name="Garcia J.N."/>
            <person name="Hewinson R.G."/>
            <person name="Behr M.A."/>
            <person name="Quail M.A."/>
            <person name="Churcher C."/>
            <person name="Barrell B.G."/>
            <person name="Parkhill J."/>
            <person name="Cole S.T."/>
        </authorList>
    </citation>
    <scope>NUCLEOTIDE SEQUENCE [LARGE SCALE GENOMIC DNA]</scope>
    <source>
        <strain>BCG / Pasteur 1173P2</strain>
    </source>
</reference>
<protein>
    <recommendedName>
        <fullName evidence="1">Putative 3-methyladenine DNA glycosylase</fullName>
        <ecNumber evidence="1">3.2.2.-</ecNumber>
    </recommendedName>
</protein>
<evidence type="ECO:0000255" key="1">
    <source>
        <dbReference type="HAMAP-Rule" id="MF_00527"/>
    </source>
</evidence>
<dbReference type="EC" id="3.2.2.-" evidence="1"/>
<dbReference type="EMBL" id="AM408590">
    <property type="protein sequence ID" value="CAL71713.1"/>
    <property type="molecule type" value="Genomic_DNA"/>
</dbReference>
<dbReference type="RefSeq" id="WP_003408373.1">
    <property type="nucleotide sequence ID" value="NC_008769.1"/>
</dbReference>
<dbReference type="SMR" id="A1KJA4"/>
<dbReference type="KEGG" id="mbb:BCG_1726"/>
<dbReference type="HOGENOM" id="CLU_060471_3_1_11"/>
<dbReference type="Proteomes" id="UP000001472">
    <property type="component" value="Chromosome"/>
</dbReference>
<dbReference type="GO" id="GO:0003905">
    <property type="term" value="F:alkylbase DNA N-glycosylase activity"/>
    <property type="evidence" value="ECO:0007669"/>
    <property type="project" value="InterPro"/>
</dbReference>
<dbReference type="GO" id="GO:0003677">
    <property type="term" value="F:DNA binding"/>
    <property type="evidence" value="ECO:0007669"/>
    <property type="project" value="InterPro"/>
</dbReference>
<dbReference type="GO" id="GO:0006284">
    <property type="term" value="P:base-excision repair"/>
    <property type="evidence" value="ECO:0007669"/>
    <property type="project" value="InterPro"/>
</dbReference>
<dbReference type="CDD" id="cd00540">
    <property type="entry name" value="AAG"/>
    <property type="match status" value="1"/>
</dbReference>
<dbReference type="Gene3D" id="3.10.300.10">
    <property type="entry name" value="Methylpurine-DNA glycosylase (MPG)"/>
    <property type="match status" value="1"/>
</dbReference>
<dbReference type="HAMAP" id="MF_00527">
    <property type="entry name" value="3MGH"/>
    <property type="match status" value="1"/>
</dbReference>
<dbReference type="InterPro" id="IPR011034">
    <property type="entry name" value="Formyl_transferase-like_C_sf"/>
</dbReference>
<dbReference type="InterPro" id="IPR003180">
    <property type="entry name" value="MPG"/>
</dbReference>
<dbReference type="InterPro" id="IPR036995">
    <property type="entry name" value="MPG_sf"/>
</dbReference>
<dbReference type="NCBIfam" id="TIGR00567">
    <property type="entry name" value="3mg"/>
    <property type="match status" value="1"/>
</dbReference>
<dbReference type="NCBIfam" id="NF002003">
    <property type="entry name" value="PRK00802.1-3"/>
    <property type="match status" value="1"/>
</dbReference>
<dbReference type="PANTHER" id="PTHR10429">
    <property type="entry name" value="DNA-3-METHYLADENINE GLYCOSYLASE"/>
    <property type="match status" value="1"/>
</dbReference>
<dbReference type="PANTHER" id="PTHR10429:SF0">
    <property type="entry name" value="DNA-3-METHYLADENINE GLYCOSYLASE"/>
    <property type="match status" value="1"/>
</dbReference>
<dbReference type="Pfam" id="PF02245">
    <property type="entry name" value="Pur_DNA_glyco"/>
    <property type="match status" value="1"/>
</dbReference>
<dbReference type="SUPFAM" id="SSF50486">
    <property type="entry name" value="FMT C-terminal domain-like"/>
    <property type="match status" value="1"/>
</dbReference>
<organism>
    <name type="scientific">Mycobacterium bovis (strain BCG / Pasteur 1173P2)</name>
    <dbReference type="NCBI Taxonomy" id="410289"/>
    <lineage>
        <taxon>Bacteria</taxon>
        <taxon>Bacillati</taxon>
        <taxon>Actinomycetota</taxon>
        <taxon>Actinomycetes</taxon>
        <taxon>Mycobacteriales</taxon>
        <taxon>Mycobacteriaceae</taxon>
        <taxon>Mycobacterium</taxon>
        <taxon>Mycobacterium tuberculosis complex</taxon>
    </lineage>
</organism>